<reference key="1">
    <citation type="journal article" date="2001" name="Nature">
        <title>Genome sequence of Yersinia pestis, the causative agent of plague.</title>
        <authorList>
            <person name="Parkhill J."/>
            <person name="Wren B.W."/>
            <person name="Thomson N.R."/>
            <person name="Titball R.W."/>
            <person name="Holden M.T.G."/>
            <person name="Prentice M.B."/>
            <person name="Sebaihia M."/>
            <person name="James K.D."/>
            <person name="Churcher C.M."/>
            <person name="Mungall K.L."/>
            <person name="Baker S."/>
            <person name="Basham D."/>
            <person name="Bentley S.D."/>
            <person name="Brooks K."/>
            <person name="Cerdeno-Tarraga A.-M."/>
            <person name="Chillingworth T."/>
            <person name="Cronin A."/>
            <person name="Davies R.M."/>
            <person name="Davis P."/>
            <person name="Dougan G."/>
            <person name="Feltwell T."/>
            <person name="Hamlin N."/>
            <person name="Holroyd S."/>
            <person name="Jagels K."/>
            <person name="Karlyshev A.V."/>
            <person name="Leather S."/>
            <person name="Moule S."/>
            <person name="Oyston P.C.F."/>
            <person name="Quail M.A."/>
            <person name="Rutherford K.M."/>
            <person name="Simmonds M."/>
            <person name="Skelton J."/>
            <person name="Stevens K."/>
            <person name="Whitehead S."/>
            <person name="Barrell B.G."/>
        </authorList>
    </citation>
    <scope>NUCLEOTIDE SEQUENCE [LARGE SCALE GENOMIC DNA]</scope>
    <source>
        <strain>CO-92 / Biovar Orientalis</strain>
    </source>
</reference>
<reference key="2">
    <citation type="journal article" date="2002" name="J. Bacteriol.">
        <title>Genome sequence of Yersinia pestis KIM.</title>
        <authorList>
            <person name="Deng W."/>
            <person name="Burland V."/>
            <person name="Plunkett G. III"/>
            <person name="Boutin A."/>
            <person name="Mayhew G.F."/>
            <person name="Liss P."/>
            <person name="Perna N.T."/>
            <person name="Rose D.J."/>
            <person name="Mau B."/>
            <person name="Zhou S."/>
            <person name="Schwartz D.C."/>
            <person name="Fetherston J.D."/>
            <person name="Lindler L.E."/>
            <person name="Brubaker R.R."/>
            <person name="Plano G.V."/>
            <person name="Straley S.C."/>
            <person name="McDonough K.A."/>
            <person name="Nilles M.L."/>
            <person name="Matson J.S."/>
            <person name="Blattner F.R."/>
            <person name="Perry R.D."/>
        </authorList>
    </citation>
    <scope>NUCLEOTIDE SEQUENCE [LARGE SCALE GENOMIC DNA]</scope>
    <source>
        <strain>KIM10+ / Biovar Mediaevalis</strain>
    </source>
</reference>
<reference key="3">
    <citation type="journal article" date="2004" name="DNA Res.">
        <title>Complete genome sequence of Yersinia pestis strain 91001, an isolate avirulent to humans.</title>
        <authorList>
            <person name="Song Y."/>
            <person name="Tong Z."/>
            <person name="Wang J."/>
            <person name="Wang L."/>
            <person name="Guo Z."/>
            <person name="Han Y."/>
            <person name="Zhang J."/>
            <person name="Pei D."/>
            <person name="Zhou D."/>
            <person name="Qin H."/>
            <person name="Pang X."/>
            <person name="Han Y."/>
            <person name="Zhai J."/>
            <person name="Li M."/>
            <person name="Cui B."/>
            <person name="Qi Z."/>
            <person name="Jin L."/>
            <person name="Dai R."/>
            <person name="Chen F."/>
            <person name="Li S."/>
            <person name="Ye C."/>
            <person name="Du Z."/>
            <person name="Lin W."/>
            <person name="Wang J."/>
            <person name="Yu J."/>
            <person name="Yang H."/>
            <person name="Wang J."/>
            <person name="Huang P."/>
            <person name="Yang R."/>
        </authorList>
    </citation>
    <scope>NUCLEOTIDE SEQUENCE [LARGE SCALE GENOMIC DNA]</scope>
    <source>
        <strain>91001 / Biovar Mediaevalis</strain>
    </source>
</reference>
<evidence type="ECO:0000250" key="1"/>
<evidence type="ECO:0000255" key="2"/>
<evidence type="ECO:0000305" key="3"/>
<gene>
    <name type="primary">efeU</name>
    <name type="synonym">fTR11</name>
    <name type="ordered locus">YPO1854</name>
    <name type="ordered locus">y2452</name>
    <name type="ordered locus">YP_1539</name>
</gene>
<feature type="chain" id="PRO_0000277549" description="Ferrous iron permease EfeU">
    <location>
        <begin position="1"/>
        <end position="282"/>
    </location>
</feature>
<feature type="topological domain" description="Periplasmic" evidence="2">
    <location>
        <position position="1"/>
    </location>
</feature>
<feature type="transmembrane region" description="Helical" evidence="2">
    <location>
        <begin position="2"/>
        <end position="22"/>
    </location>
</feature>
<feature type="topological domain" description="Cytoplasmic" evidence="2">
    <location>
        <begin position="23"/>
        <end position="35"/>
    </location>
</feature>
<feature type="transmembrane region" description="Helical" evidence="2">
    <location>
        <begin position="36"/>
        <end position="56"/>
    </location>
</feature>
<feature type="topological domain" description="Periplasmic" evidence="2">
    <location>
        <begin position="57"/>
        <end position="69"/>
    </location>
</feature>
<feature type="transmembrane region" description="Helical" evidence="2">
    <location>
        <begin position="70"/>
        <end position="90"/>
    </location>
</feature>
<feature type="topological domain" description="Cytoplasmic" evidence="2">
    <location>
        <begin position="91"/>
        <end position="118"/>
    </location>
</feature>
<feature type="transmembrane region" description="Helical" evidence="2">
    <location>
        <begin position="119"/>
        <end position="139"/>
    </location>
</feature>
<feature type="topological domain" description="Periplasmic" evidence="2">
    <location>
        <begin position="140"/>
        <end position="147"/>
    </location>
</feature>
<feature type="transmembrane region" description="Helical" evidence="2">
    <location>
        <begin position="148"/>
        <end position="168"/>
    </location>
</feature>
<feature type="topological domain" description="Cytoplasmic" evidence="2">
    <location>
        <begin position="169"/>
        <end position="179"/>
    </location>
</feature>
<feature type="transmembrane region" description="Helical" evidence="2">
    <location>
        <begin position="180"/>
        <end position="200"/>
    </location>
</feature>
<feature type="topological domain" description="Periplasmic" evidence="2">
    <location>
        <begin position="201"/>
        <end position="244"/>
    </location>
</feature>
<feature type="transmembrane region" description="Helical" evidence="2">
    <location>
        <begin position="245"/>
        <end position="265"/>
    </location>
</feature>
<feature type="topological domain" description="Cytoplasmic" evidence="2">
    <location>
        <begin position="266"/>
        <end position="282"/>
    </location>
</feature>
<name>EFEU_YERPE</name>
<dbReference type="EMBL" id="AL590842">
    <property type="protein sequence ID" value="CAL20494.1"/>
    <property type="molecule type" value="Genomic_DNA"/>
</dbReference>
<dbReference type="EMBL" id="AE009952">
    <property type="protein sequence ID" value="AAM86009.1"/>
    <property type="status" value="ALT_INIT"/>
    <property type="molecule type" value="Genomic_DNA"/>
</dbReference>
<dbReference type="EMBL" id="AE017042">
    <property type="protein sequence ID" value="AAS61774.1"/>
    <property type="status" value="ALT_INIT"/>
    <property type="molecule type" value="Genomic_DNA"/>
</dbReference>
<dbReference type="PIR" id="AC0226">
    <property type="entry name" value="AC0226"/>
</dbReference>
<dbReference type="RefSeq" id="WP_002211165.1">
    <property type="nucleotide sequence ID" value="NZ_WUCM01000005.1"/>
</dbReference>
<dbReference type="RefSeq" id="YP_002346848.1">
    <property type="nucleotide sequence ID" value="NC_003143.1"/>
</dbReference>
<dbReference type="STRING" id="214092.YPO1854"/>
<dbReference type="PaxDb" id="214092-YPO1854"/>
<dbReference type="DNASU" id="1147399"/>
<dbReference type="EnsemblBacteria" id="AAS61774">
    <property type="protein sequence ID" value="AAS61774"/>
    <property type="gene ID" value="YP_1539"/>
</dbReference>
<dbReference type="GeneID" id="57976727"/>
<dbReference type="KEGG" id="ype:YPO1854"/>
<dbReference type="KEGG" id="ypk:y2452"/>
<dbReference type="KEGG" id="ypm:YP_1539"/>
<dbReference type="PATRIC" id="fig|214092.21.peg.2219"/>
<dbReference type="eggNOG" id="COG0672">
    <property type="taxonomic scope" value="Bacteria"/>
</dbReference>
<dbReference type="HOGENOM" id="CLU_077905_0_0_6"/>
<dbReference type="OrthoDB" id="7260758at2"/>
<dbReference type="Proteomes" id="UP000000815">
    <property type="component" value="Chromosome"/>
</dbReference>
<dbReference type="Proteomes" id="UP000001019">
    <property type="component" value="Chromosome"/>
</dbReference>
<dbReference type="Proteomes" id="UP000002490">
    <property type="component" value="Chromosome"/>
</dbReference>
<dbReference type="GO" id="GO:0033573">
    <property type="term" value="C:high-affinity iron permease complex"/>
    <property type="evidence" value="ECO:0007669"/>
    <property type="project" value="InterPro"/>
</dbReference>
<dbReference type="GO" id="GO:0005886">
    <property type="term" value="C:plasma membrane"/>
    <property type="evidence" value="ECO:0000318"/>
    <property type="project" value="GO_Central"/>
</dbReference>
<dbReference type="GO" id="GO:0015093">
    <property type="term" value="F:ferrous iron transmembrane transporter activity"/>
    <property type="evidence" value="ECO:0000318"/>
    <property type="project" value="GO_Central"/>
</dbReference>
<dbReference type="GO" id="GO:0034755">
    <property type="term" value="P:iron ion transmembrane transport"/>
    <property type="evidence" value="ECO:0000318"/>
    <property type="project" value="GO_Central"/>
</dbReference>
<dbReference type="InterPro" id="IPR004923">
    <property type="entry name" value="FTR1/Fip1/EfeU"/>
</dbReference>
<dbReference type="NCBIfam" id="NF041756">
    <property type="entry name" value="EfeU"/>
    <property type="match status" value="1"/>
</dbReference>
<dbReference type="PANTHER" id="PTHR31632">
    <property type="entry name" value="IRON TRANSPORTER FTH1"/>
    <property type="match status" value="1"/>
</dbReference>
<dbReference type="PANTHER" id="PTHR31632:SF2">
    <property type="entry name" value="PLASMA MEMBRANE IRON PERMEASE"/>
    <property type="match status" value="1"/>
</dbReference>
<dbReference type="Pfam" id="PF03239">
    <property type="entry name" value="FTR1"/>
    <property type="match status" value="1"/>
</dbReference>
<keyword id="KW-0997">Cell inner membrane</keyword>
<keyword id="KW-1003">Cell membrane</keyword>
<keyword id="KW-0406">Ion transport</keyword>
<keyword id="KW-0408">Iron</keyword>
<keyword id="KW-0410">Iron transport</keyword>
<keyword id="KW-0472">Membrane</keyword>
<keyword id="KW-1185">Reference proteome</keyword>
<keyword id="KW-0812">Transmembrane</keyword>
<keyword id="KW-1133">Transmembrane helix</keyword>
<keyword id="KW-0813">Transport</keyword>
<accession>Q0WFU0</accession>
<accession>Q74V00</accession>
<accession>Q8D0B7</accession>
<comment type="function">
    <text evidence="1">Uptake of Fe(2+) ions across the membrane.</text>
</comment>
<comment type="subunit">
    <text evidence="1">Part of a ferrous iron transporter composed of EfeU, EfeO and EfeB.</text>
</comment>
<comment type="subcellular location">
    <subcellularLocation>
        <location evidence="1">Cell inner membrane</location>
        <topology evidence="1">Multi-pass membrane protein</topology>
    </subcellularLocation>
</comment>
<comment type="similarity">
    <text evidence="3">Belongs to the oxidase-dependent Fe transporter (OFeT) (TC 9.A.10.1) family.</text>
</comment>
<comment type="sequence caution" evidence="3">
    <conflict type="erroneous initiation">
        <sequence resource="EMBL-CDS" id="AAM86009"/>
    </conflict>
    <text>Extended N-terminus.</text>
</comment>
<comment type="sequence caution" evidence="3">
    <conflict type="erroneous initiation">
        <sequence resource="EMBL-CDS" id="AAS61774"/>
    </conflict>
    <text>Extended N-terminus.</text>
</comment>
<organism>
    <name type="scientific">Yersinia pestis</name>
    <dbReference type="NCBI Taxonomy" id="632"/>
    <lineage>
        <taxon>Bacteria</taxon>
        <taxon>Pseudomonadati</taxon>
        <taxon>Pseudomonadota</taxon>
        <taxon>Gammaproteobacteria</taxon>
        <taxon>Enterobacterales</taxon>
        <taxon>Yersiniaceae</taxon>
        <taxon>Yersinia</taxon>
    </lineage>
</organism>
<sequence length="282" mass="30688">MFVPFLIMFREGLEAALIVSLIASYLKRTQRGQWMGAVWVGVVVAAVLCLAIGIFINETTGEFPQKQQELFEGIIAVVAVCILTYMVFWMRKVSKSVKVHLEGAIDNALNSGRGQGWALVAMVFFAVAREGLESVFFLLAAFQQDVGIGAPIGAILGLVCAILVGMAIYWGGVKLHLAKFFKWTSLFILFVAAGLAAGAIRAFHEAGLWNHFQDIAFDLTDVLSTHSLLGTFLEGMFGYQEAPTVSEVSVYFIYLIPALILFFLPPRSTAGSAIAAARKINP</sequence>
<proteinExistence type="inferred from homology"/>
<protein>
    <recommendedName>
        <fullName>Ferrous iron permease EfeU</fullName>
    </recommendedName>
    <alternativeName>
        <fullName>Fe(2+) ion permease EfeU</fullName>
    </alternativeName>
    <alternativeName>
        <fullName>Ferrous iron uptake protein</fullName>
    </alternativeName>
</protein>